<evidence type="ECO:0000255" key="1">
    <source>
        <dbReference type="HAMAP-Rule" id="MF_01561"/>
    </source>
</evidence>
<sequence length="245" mass="26853">MYPVDLHMHTVASTHAYSTLSDYIAEAKRKGIKLFAITDHGPDMEDAPHHWHFINMRIWPRLVDGVGILRGIEANIKNINGEIDCSGKMFDSLDLIIAGFHEPVFAPHDKETNTQAMIATIASGKVHIISHPGNPKYPVEVKAIAQAAAKHHVALEINNSSFLHSRKGSEDNCRAVAAAVRDAGGWVALGSDSHTAFTLGDFTECRKILDAVNFPEDRILNVSPQCLLAFLESRGMAPVPEFAEL</sequence>
<proteinExistence type="inferred from homology"/>
<comment type="cofactor">
    <cofactor evidence="1">
        <name>Zn(2+)</name>
        <dbReference type="ChEBI" id="CHEBI:29105"/>
    </cofactor>
    <text evidence="1">Binds 3 Zn(2+) ions per subunit.</text>
</comment>
<comment type="subunit">
    <text evidence="1">Homotrimer.</text>
</comment>
<comment type="similarity">
    <text evidence="1">Belongs to the PHP family.</text>
</comment>
<dbReference type="EC" id="3.1.3.-" evidence="1"/>
<dbReference type="EMBL" id="CP001120">
    <property type="protein sequence ID" value="ACF70173.1"/>
    <property type="molecule type" value="Genomic_DNA"/>
</dbReference>
<dbReference type="RefSeq" id="WP_000283641.1">
    <property type="nucleotide sequence ID" value="NC_011083.1"/>
</dbReference>
<dbReference type="SMR" id="B4TEQ7"/>
<dbReference type="KEGG" id="seh:SeHA_C1247"/>
<dbReference type="HOGENOM" id="CLU_061999_0_1_6"/>
<dbReference type="Proteomes" id="UP000001866">
    <property type="component" value="Chromosome"/>
</dbReference>
<dbReference type="GO" id="GO:0005829">
    <property type="term" value="C:cytosol"/>
    <property type="evidence" value="ECO:0007669"/>
    <property type="project" value="TreeGrafter"/>
</dbReference>
<dbReference type="GO" id="GO:0016791">
    <property type="term" value="F:phosphatase activity"/>
    <property type="evidence" value="ECO:0007669"/>
    <property type="project" value="UniProtKB-UniRule"/>
</dbReference>
<dbReference type="GO" id="GO:0008270">
    <property type="term" value="F:zinc ion binding"/>
    <property type="evidence" value="ECO:0007669"/>
    <property type="project" value="UniProtKB-UniRule"/>
</dbReference>
<dbReference type="GO" id="GO:0071978">
    <property type="term" value="P:bacterial-type flagellum-dependent swarming motility"/>
    <property type="evidence" value="ECO:0007669"/>
    <property type="project" value="TreeGrafter"/>
</dbReference>
<dbReference type="CDD" id="cd07437">
    <property type="entry name" value="PHP_HisPPase_Ycdx_like"/>
    <property type="match status" value="1"/>
</dbReference>
<dbReference type="FunFam" id="3.20.20.140:FF:000008">
    <property type="entry name" value="Probable phosphatase YcdX"/>
    <property type="match status" value="1"/>
</dbReference>
<dbReference type="Gene3D" id="3.20.20.140">
    <property type="entry name" value="Metal-dependent hydrolases"/>
    <property type="match status" value="1"/>
</dbReference>
<dbReference type="HAMAP" id="MF_01561">
    <property type="entry name" value="YcdX_phosphat"/>
    <property type="match status" value="1"/>
</dbReference>
<dbReference type="InterPro" id="IPR023710">
    <property type="entry name" value="Phosphatase_YcdX_put"/>
</dbReference>
<dbReference type="InterPro" id="IPR004013">
    <property type="entry name" value="PHP_dom"/>
</dbReference>
<dbReference type="InterPro" id="IPR050243">
    <property type="entry name" value="PHP_phosphatase"/>
</dbReference>
<dbReference type="InterPro" id="IPR003141">
    <property type="entry name" value="Pol/His_phosphatase_N"/>
</dbReference>
<dbReference type="InterPro" id="IPR016195">
    <property type="entry name" value="Pol/histidinol_Pase-like"/>
</dbReference>
<dbReference type="NCBIfam" id="NF006702">
    <property type="entry name" value="PRK09248.1"/>
    <property type="match status" value="1"/>
</dbReference>
<dbReference type="PANTHER" id="PTHR36928">
    <property type="entry name" value="PHOSPHATASE YCDX-RELATED"/>
    <property type="match status" value="1"/>
</dbReference>
<dbReference type="PANTHER" id="PTHR36928:SF1">
    <property type="entry name" value="PHOSPHATASE YCDX-RELATED"/>
    <property type="match status" value="1"/>
</dbReference>
<dbReference type="Pfam" id="PF02811">
    <property type="entry name" value="PHP"/>
    <property type="match status" value="1"/>
</dbReference>
<dbReference type="SMART" id="SM00481">
    <property type="entry name" value="POLIIIAc"/>
    <property type="match status" value="1"/>
</dbReference>
<dbReference type="SUPFAM" id="SSF89550">
    <property type="entry name" value="PHP domain-like"/>
    <property type="match status" value="1"/>
</dbReference>
<keyword id="KW-0378">Hydrolase</keyword>
<keyword id="KW-0479">Metal-binding</keyword>
<keyword id="KW-0862">Zinc</keyword>
<reference key="1">
    <citation type="journal article" date="2011" name="J. Bacteriol.">
        <title>Comparative genomics of 28 Salmonella enterica isolates: evidence for CRISPR-mediated adaptive sublineage evolution.</title>
        <authorList>
            <person name="Fricke W.F."/>
            <person name="Mammel M.K."/>
            <person name="McDermott P.F."/>
            <person name="Tartera C."/>
            <person name="White D.G."/>
            <person name="Leclerc J.E."/>
            <person name="Ravel J."/>
            <person name="Cebula T.A."/>
        </authorList>
    </citation>
    <scope>NUCLEOTIDE SEQUENCE [LARGE SCALE GENOMIC DNA]</scope>
    <source>
        <strain>SL476</strain>
    </source>
</reference>
<gene>
    <name evidence="1" type="primary">ycdX</name>
    <name type="ordered locus">SeHA_C1247</name>
</gene>
<accession>B4TEQ7</accession>
<organism>
    <name type="scientific">Salmonella heidelberg (strain SL476)</name>
    <dbReference type="NCBI Taxonomy" id="454169"/>
    <lineage>
        <taxon>Bacteria</taxon>
        <taxon>Pseudomonadati</taxon>
        <taxon>Pseudomonadota</taxon>
        <taxon>Gammaproteobacteria</taxon>
        <taxon>Enterobacterales</taxon>
        <taxon>Enterobacteriaceae</taxon>
        <taxon>Salmonella</taxon>
    </lineage>
</organism>
<feature type="chain" id="PRO_1000147143" description="Probable phosphatase YcdX">
    <location>
        <begin position="1"/>
        <end position="245"/>
    </location>
</feature>
<feature type="binding site" evidence="1">
    <location>
        <position position="7"/>
    </location>
    <ligand>
        <name>Zn(2+)</name>
        <dbReference type="ChEBI" id="CHEBI:29105"/>
        <label>1</label>
    </ligand>
</feature>
<feature type="binding site" evidence="1">
    <location>
        <position position="9"/>
    </location>
    <ligand>
        <name>Zn(2+)</name>
        <dbReference type="ChEBI" id="CHEBI:29105"/>
        <label>1</label>
    </ligand>
</feature>
<feature type="binding site" evidence="1">
    <location>
        <position position="15"/>
    </location>
    <ligand>
        <name>Zn(2+)</name>
        <dbReference type="ChEBI" id="CHEBI:29105"/>
        <label>2</label>
    </ligand>
</feature>
<feature type="binding site" evidence="1">
    <location>
        <position position="40"/>
    </location>
    <ligand>
        <name>Zn(2+)</name>
        <dbReference type="ChEBI" id="CHEBI:29105"/>
        <label>2</label>
    </ligand>
</feature>
<feature type="binding site" evidence="1">
    <location>
        <position position="73"/>
    </location>
    <ligand>
        <name>Zn(2+)</name>
        <dbReference type="ChEBI" id="CHEBI:29105"/>
        <label>1</label>
    </ligand>
</feature>
<feature type="binding site" evidence="1">
    <location>
        <position position="73"/>
    </location>
    <ligand>
        <name>Zn(2+)</name>
        <dbReference type="ChEBI" id="CHEBI:29105"/>
        <label>3</label>
    </ligand>
</feature>
<feature type="binding site" evidence="1">
    <location>
        <position position="101"/>
    </location>
    <ligand>
        <name>Zn(2+)</name>
        <dbReference type="ChEBI" id="CHEBI:29105"/>
        <label>3</label>
    </ligand>
</feature>
<feature type="binding site" evidence="1">
    <location>
        <position position="131"/>
    </location>
    <ligand>
        <name>Zn(2+)</name>
        <dbReference type="ChEBI" id="CHEBI:29105"/>
        <label>3</label>
    </ligand>
</feature>
<feature type="binding site" evidence="1">
    <location>
        <position position="192"/>
    </location>
    <ligand>
        <name>Zn(2+)</name>
        <dbReference type="ChEBI" id="CHEBI:29105"/>
        <label>1</label>
    </ligand>
</feature>
<feature type="binding site" evidence="1">
    <location>
        <position position="194"/>
    </location>
    <ligand>
        <name>Zn(2+)</name>
        <dbReference type="ChEBI" id="CHEBI:29105"/>
        <label>2</label>
    </ligand>
</feature>
<protein>
    <recommendedName>
        <fullName evidence="1">Probable phosphatase YcdX</fullName>
        <ecNumber evidence="1">3.1.3.-</ecNumber>
    </recommendedName>
</protein>
<name>YCDX_SALHS</name>